<evidence type="ECO:0000250" key="1"/>
<evidence type="ECO:0000256" key="2">
    <source>
        <dbReference type="SAM" id="MobiDB-lite"/>
    </source>
</evidence>
<dbReference type="EMBL" id="AE016820">
    <property type="protein sequence ID" value="AAS54675.1"/>
    <property type="molecule type" value="Genomic_DNA"/>
</dbReference>
<dbReference type="RefSeq" id="NP_986851.1">
    <property type="nucleotide sequence ID" value="NM_211913.1"/>
</dbReference>
<dbReference type="FunCoup" id="Q74ZL3">
    <property type="interactions" value="65"/>
</dbReference>
<dbReference type="EnsemblFungi" id="AAS54675">
    <property type="protein sequence ID" value="AAS54675"/>
    <property type="gene ID" value="AGOS_AGR185C"/>
</dbReference>
<dbReference type="GeneID" id="4623153"/>
<dbReference type="KEGG" id="ago:AGOS_AGR185C"/>
<dbReference type="HOGENOM" id="CLU_372522_0_0_1"/>
<dbReference type="InParanoid" id="Q74ZL3"/>
<dbReference type="OMA" id="EMYMHAL"/>
<dbReference type="OrthoDB" id="4069015at2759"/>
<dbReference type="Proteomes" id="UP000000591">
    <property type="component" value="Chromosome VII"/>
</dbReference>
<dbReference type="GO" id="GO:0005886">
    <property type="term" value="C:plasma membrane"/>
    <property type="evidence" value="ECO:0007669"/>
    <property type="project" value="UniProtKB-SubCell"/>
</dbReference>
<dbReference type="GO" id="GO:0006310">
    <property type="term" value="P:DNA recombination"/>
    <property type="evidence" value="ECO:0007669"/>
    <property type="project" value="UniProtKB-KW"/>
</dbReference>
<dbReference type="GO" id="GO:0051321">
    <property type="term" value="P:meiotic cell cycle"/>
    <property type="evidence" value="ECO:0007669"/>
    <property type="project" value="UniProtKB-KW"/>
</dbReference>
<accession>Q74ZL3</accession>
<proteinExistence type="inferred from homology"/>
<reference key="1">
    <citation type="journal article" date="2004" name="Science">
        <title>The Ashbya gossypii genome as a tool for mapping the ancient Saccharomyces cerevisiae genome.</title>
        <authorList>
            <person name="Dietrich F.S."/>
            <person name="Voegeli S."/>
            <person name="Brachat S."/>
            <person name="Lerch A."/>
            <person name="Gates K."/>
            <person name="Steiner S."/>
            <person name="Mohr C."/>
            <person name="Poehlmann R."/>
            <person name="Luedi P."/>
            <person name="Choi S."/>
            <person name="Wing R.A."/>
            <person name="Flavier A."/>
            <person name="Gaffney T.D."/>
            <person name="Philippsen P."/>
        </authorList>
    </citation>
    <scope>NUCLEOTIDE SEQUENCE [LARGE SCALE GENOMIC DNA]</scope>
    <source>
        <strain>ATCC 10895 / CBS 109.51 / FGSC 9923 / NRRL Y-1056</strain>
    </source>
</reference>
<reference key="2">
    <citation type="journal article" date="2013" name="G3 (Bethesda)">
        <title>Genomes of Ashbya fungi isolated from insects reveal four mating-type loci, numerous translocations, lack of transposons, and distinct gene duplications.</title>
        <authorList>
            <person name="Dietrich F.S."/>
            <person name="Voegeli S."/>
            <person name="Kuo S."/>
            <person name="Philippsen P."/>
        </authorList>
    </citation>
    <scope>GENOME REANNOTATION</scope>
    <source>
        <strain>ATCC 10895 / CBS 109.51 / FGSC 9923 / NRRL Y-1056</strain>
    </source>
</reference>
<sequence length="751" mass="81930">MVHLPLSRSRSGRRAVPDLSRYQQFYEADAADGYSTGSGLSSAAASVASLRRPGVGMGRTQSLTGYGRTRSLGAARPSYLGAPPRTYSMSSQRRANSLRSNNGFGPPAVAAGNTITVKTTETKDLQGRTRTVTRQTVKHINGVRYVETTTTMTMPDGEYPDDFYGFEGDFTAKQTSSGHVYQNARGAPDISDIAEEESLEEYLDARDTAPALRIQLRAPPRVQQQRQLQRQRRLSDTNFPARRSAKSSPARQSSEEPPATTKPHRIRFDETPQIVGIDPPTQKKAPKKQMTEQEMYMHALDAARKKVYGEISQPALEAKQPHRSTMSKRMTLRDEATLAANTPPERSRPAKREVRKKEGHSHHNFLSVLRRDSSPKRHAVQPSERVHNKEKTLEMTPDSSSASSYEEARFEHSDEMYNKALEVAKKKYHLTQENSTRDNGTTECPRTPMTSLMSTNVSSDTAESTLLGTPVYSSNAPFDRSPQPSSGCETGNTTPKSIPRRPSFLDKLVRFSQEKYGYRPRRSISSQGHKAEHEHVFTDDIPPLPDIPLVDPMQVKPKDVPLPTVEPALGPTDVSPARVADPESNIETPRTLAPARSSISSSPRRSSPPQAFQELVPLQSTQSETTGDLADALALGDNSLDLLPGRVSEISPKTSFEHFVLAPEVPETDEKPAAAPAVAAEAPLSNPPSVVVVPSATSSVPAAQGAAPGVAVTEGPSLGGPAAPVRALHATKTAAAPAKKRSFFHKLFKKY</sequence>
<name>MSC3_EREGS</name>
<organism>
    <name type="scientific">Eremothecium gossypii (strain ATCC 10895 / CBS 109.51 / FGSC 9923 / NRRL Y-1056)</name>
    <name type="common">Yeast</name>
    <name type="synonym">Ashbya gossypii</name>
    <dbReference type="NCBI Taxonomy" id="284811"/>
    <lineage>
        <taxon>Eukaryota</taxon>
        <taxon>Fungi</taxon>
        <taxon>Dikarya</taxon>
        <taxon>Ascomycota</taxon>
        <taxon>Saccharomycotina</taxon>
        <taxon>Saccharomycetes</taxon>
        <taxon>Saccharomycetales</taxon>
        <taxon>Saccharomycetaceae</taxon>
        <taxon>Eremothecium</taxon>
    </lineage>
</organism>
<gene>
    <name type="primary">MSC3</name>
    <name type="ordered locus">AGR185C</name>
</gene>
<protein>
    <recommendedName>
        <fullName>Meiotic sister-chromatid recombination protein 3</fullName>
    </recommendedName>
</protein>
<keyword id="KW-1003">Cell membrane</keyword>
<keyword id="KW-0233">DNA recombination</keyword>
<keyword id="KW-0469">Meiosis</keyword>
<keyword id="KW-0472">Membrane</keyword>
<keyword id="KW-1185">Reference proteome</keyword>
<feature type="chain" id="PRO_0000096592" description="Meiotic sister-chromatid recombination protein 3">
    <location>
        <begin position="1"/>
        <end position="751"/>
    </location>
</feature>
<feature type="region of interest" description="Disordered" evidence="2">
    <location>
        <begin position="54"/>
        <end position="88"/>
    </location>
</feature>
<feature type="region of interest" description="Disordered" evidence="2">
    <location>
        <begin position="216"/>
        <end position="290"/>
    </location>
</feature>
<feature type="region of interest" description="Disordered" evidence="2">
    <location>
        <begin position="314"/>
        <end position="410"/>
    </location>
</feature>
<feature type="region of interest" description="Disordered" evidence="2">
    <location>
        <begin position="431"/>
        <end position="504"/>
    </location>
</feature>
<feature type="region of interest" description="Disordered" evidence="2">
    <location>
        <begin position="558"/>
        <end position="610"/>
    </location>
</feature>
<feature type="compositionally biased region" description="Low complexity" evidence="2">
    <location>
        <begin position="216"/>
        <end position="228"/>
    </location>
</feature>
<feature type="compositionally biased region" description="Basic and acidic residues" evidence="2">
    <location>
        <begin position="345"/>
        <end position="356"/>
    </location>
</feature>
<feature type="compositionally biased region" description="Basic and acidic residues" evidence="2">
    <location>
        <begin position="384"/>
        <end position="393"/>
    </location>
</feature>
<feature type="compositionally biased region" description="Polar residues" evidence="2">
    <location>
        <begin position="431"/>
        <end position="496"/>
    </location>
</feature>
<feature type="compositionally biased region" description="Low complexity" evidence="2">
    <location>
        <begin position="596"/>
        <end position="609"/>
    </location>
</feature>
<comment type="function">
    <text evidence="1">May be involved in the control of meiotic sister-chromatid recombination.</text>
</comment>
<comment type="subcellular location">
    <subcellularLocation>
        <location>Cell membrane</location>
        <topology>Peripheral membrane protein</topology>
    </subcellularLocation>
    <text evidence="1">Cell periphery.</text>
</comment>